<sequence length="286" mass="31592">MISSKTSFIALIGNPVSHSLSPIMQNAALQYLGLDLIYIAMPCKDEDLELVMNSLKKINCKGLNITIPHKEKVFDLCSEISPIANKLKAINTLKLNSAKEWSATNTDVEGFIYPLKTLNLTKKQSIVLGSGGAARSVIQGLINLNFSTISVVSRNKSSLDELIKNFENQITIEGLLNNDNRTETLIEEADLIVNTTPVGMKTTKHEMNVLPYGDVFWRSLNSKTIVYDLIYNPAPTPLLKFSAKKGCITIDGLKMLVAQGAKSLSFWTNGLEVPFHIMNDALKNYL</sequence>
<proteinExistence type="inferred from homology"/>
<accession>Q317T6</accession>
<keyword id="KW-0028">Amino-acid biosynthesis</keyword>
<keyword id="KW-0057">Aromatic amino acid biosynthesis</keyword>
<keyword id="KW-0521">NADP</keyword>
<keyword id="KW-0560">Oxidoreductase</keyword>
<evidence type="ECO:0000255" key="1">
    <source>
        <dbReference type="HAMAP-Rule" id="MF_00222"/>
    </source>
</evidence>
<organism>
    <name type="scientific">Prochlorococcus marinus (strain MIT 9312)</name>
    <dbReference type="NCBI Taxonomy" id="74546"/>
    <lineage>
        <taxon>Bacteria</taxon>
        <taxon>Bacillati</taxon>
        <taxon>Cyanobacteriota</taxon>
        <taxon>Cyanophyceae</taxon>
        <taxon>Synechococcales</taxon>
        <taxon>Prochlorococcaceae</taxon>
        <taxon>Prochlorococcus</taxon>
    </lineage>
</organism>
<feature type="chain" id="PRO_0000325148" description="Shikimate dehydrogenase (NADP(+))">
    <location>
        <begin position="1"/>
        <end position="286"/>
    </location>
</feature>
<feature type="active site" description="Proton acceptor" evidence="1">
    <location>
        <position position="70"/>
    </location>
</feature>
<feature type="binding site" evidence="1">
    <location>
        <begin position="19"/>
        <end position="21"/>
    </location>
    <ligand>
        <name>shikimate</name>
        <dbReference type="ChEBI" id="CHEBI:36208"/>
    </ligand>
</feature>
<feature type="binding site" evidence="1">
    <location>
        <position position="66"/>
    </location>
    <ligand>
        <name>shikimate</name>
        <dbReference type="ChEBI" id="CHEBI:36208"/>
    </ligand>
</feature>
<feature type="binding site" evidence="1">
    <location>
        <position position="91"/>
    </location>
    <ligand>
        <name>shikimate</name>
        <dbReference type="ChEBI" id="CHEBI:36208"/>
    </ligand>
</feature>
<feature type="binding site" evidence="1">
    <location>
        <position position="107"/>
    </location>
    <ligand>
        <name>shikimate</name>
        <dbReference type="ChEBI" id="CHEBI:36208"/>
    </ligand>
</feature>
<feature type="binding site" evidence="1">
    <location>
        <begin position="129"/>
        <end position="133"/>
    </location>
    <ligand>
        <name>NADP(+)</name>
        <dbReference type="ChEBI" id="CHEBI:58349"/>
    </ligand>
</feature>
<feature type="binding site" evidence="1">
    <location>
        <position position="229"/>
    </location>
    <ligand>
        <name>NADP(+)</name>
        <dbReference type="ChEBI" id="CHEBI:58349"/>
    </ligand>
</feature>
<feature type="binding site" evidence="1">
    <location>
        <position position="231"/>
    </location>
    <ligand>
        <name>shikimate</name>
        <dbReference type="ChEBI" id="CHEBI:36208"/>
    </ligand>
</feature>
<feature type="binding site" evidence="1">
    <location>
        <position position="252"/>
    </location>
    <ligand>
        <name>NADP(+)</name>
        <dbReference type="ChEBI" id="CHEBI:58349"/>
    </ligand>
</feature>
<dbReference type="EC" id="1.1.1.25" evidence="1"/>
<dbReference type="EMBL" id="CP000111">
    <property type="protein sequence ID" value="ABB50859.1"/>
    <property type="molecule type" value="Genomic_DNA"/>
</dbReference>
<dbReference type="RefSeq" id="WP_011377340.1">
    <property type="nucleotide sequence ID" value="NC_007577.1"/>
</dbReference>
<dbReference type="SMR" id="Q317T6"/>
<dbReference type="STRING" id="74546.PMT9312_1798"/>
<dbReference type="KEGG" id="pmi:PMT9312_1798"/>
<dbReference type="eggNOG" id="COG0169">
    <property type="taxonomic scope" value="Bacteria"/>
</dbReference>
<dbReference type="HOGENOM" id="CLU_044063_4_1_3"/>
<dbReference type="OrthoDB" id="9792692at2"/>
<dbReference type="UniPathway" id="UPA00053">
    <property type="reaction ID" value="UER00087"/>
</dbReference>
<dbReference type="Proteomes" id="UP000002715">
    <property type="component" value="Chromosome"/>
</dbReference>
<dbReference type="GO" id="GO:0005829">
    <property type="term" value="C:cytosol"/>
    <property type="evidence" value="ECO:0007669"/>
    <property type="project" value="TreeGrafter"/>
</dbReference>
<dbReference type="GO" id="GO:0050661">
    <property type="term" value="F:NADP binding"/>
    <property type="evidence" value="ECO:0007669"/>
    <property type="project" value="InterPro"/>
</dbReference>
<dbReference type="GO" id="GO:0004764">
    <property type="term" value="F:shikimate 3-dehydrogenase (NADP+) activity"/>
    <property type="evidence" value="ECO:0007669"/>
    <property type="project" value="UniProtKB-UniRule"/>
</dbReference>
<dbReference type="GO" id="GO:0008652">
    <property type="term" value="P:amino acid biosynthetic process"/>
    <property type="evidence" value="ECO:0007669"/>
    <property type="project" value="UniProtKB-KW"/>
</dbReference>
<dbReference type="GO" id="GO:0009073">
    <property type="term" value="P:aromatic amino acid family biosynthetic process"/>
    <property type="evidence" value="ECO:0007669"/>
    <property type="project" value="UniProtKB-KW"/>
</dbReference>
<dbReference type="GO" id="GO:0009423">
    <property type="term" value="P:chorismate biosynthetic process"/>
    <property type="evidence" value="ECO:0007669"/>
    <property type="project" value="UniProtKB-UniRule"/>
</dbReference>
<dbReference type="GO" id="GO:0019632">
    <property type="term" value="P:shikimate metabolic process"/>
    <property type="evidence" value="ECO:0007669"/>
    <property type="project" value="InterPro"/>
</dbReference>
<dbReference type="CDD" id="cd01065">
    <property type="entry name" value="NAD_bind_Shikimate_DH"/>
    <property type="match status" value="1"/>
</dbReference>
<dbReference type="Gene3D" id="3.40.50.10860">
    <property type="entry name" value="Leucine Dehydrogenase, chain A, domain 1"/>
    <property type="match status" value="1"/>
</dbReference>
<dbReference type="Gene3D" id="3.40.50.720">
    <property type="entry name" value="NAD(P)-binding Rossmann-like Domain"/>
    <property type="match status" value="1"/>
</dbReference>
<dbReference type="HAMAP" id="MF_00222">
    <property type="entry name" value="Shikimate_DH_AroE"/>
    <property type="match status" value="1"/>
</dbReference>
<dbReference type="InterPro" id="IPR046346">
    <property type="entry name" value="Aminoacid_DH-like_N_sf"/>
</dbReference>
<dbReference type="InterPro" id="IPR036291">
    <property type="entry name" value="NAD(P)-bd_dom_sf"/>
</dbReference>
<dbReference type="InterPro" id="IPR041121">
    <property type="entry name" value="SDH_C"/>
</dbReference>
<dbReference type="InterPro" id="IPR011342">
    <property type="entry name" value="Shikimate_DH"/>
</dbReference>
<dbReference type="InterPro" id="IPR013708">
    <property type="entry name" value="Shikimate_DH-bd_N"/>
</dbReference>
<dbReference type="InterPro" id="IPR022893">
    <property type="entry name" value="Shikimate_DH_fam"/>
</dbReference>
<dbReference type="InterPro" id="IPR006151">
    <property type="entry name" value="Shikm_DH/Glu-tRNA_Rdtase"/>
</dbReference>
<dbReference type="NCBIfam" id="TIGR00507">
    <property type="entry name" value="aroE"/>
    <property type="match status" value="1"/>
</dbReference>
<dbReference type="NCBIfam" id="NF001314">
    <property type="entry name" value="PRK00258.2-2"/>
    <property type="match status" value="1"/>
</dbReference>
<dbReference type="PANTHER" id="PTHR21089:SF1">
    <property type="entry name" value="BIFUNCTIONAL 3-DEHYDROQUINATE DEHYDRATASE_SHIKIMATE DEHYDROGENASE, CHLOROPLASTIC"/>
    <property type="match status" value="1"/>
</dbReference>
<dbReference type="PANTHER" id="PTHR21089">
    <property type="entry name" value="SHIKIMATE DEHYDROGENASE"/>
    <property type="match status" value="1"/>
</dbReference>
<dbReference type="Pfam" id="PF18317">
    <property type="entry name" value="SDH_C"/>
    <property type="match status" value="1"/>
</dbReference>
<dbReference type="Pfam" id="PF01488">
    <property type="entry name" value="Shikimate_DH"/>
    <property type="match status" value="1"/>
</dbReference>
<dbReference type="Pfam" id="PF08501">
    <property type="entry name" value="Shikimate_dh_N"/>
    <property type="match status" value="1"/>
</dbReference>
<dbReference type="SUPFAM" id="SSF53223">
    <property type="entry name" value="Aminoacid dehydrogenase-like, N-terminal domain"/>
    <property type="match status" value="1"/>
</dbReference>
<dbReference type="SUPFAM" id="SSF51735">
    <property type="entry name" value="NAD(P)-binding Rossmann-fold domains"/>
    <property type="match status" value="1"/>
</dbReference>
<gene>
    <name evidence="1" type="primary">aroE</name>
    <name type="ordered locus">PMT9312_1798</name>
</gene>
<comment type="function">
    <text evidence="1">Involved in the biosynthesis of the chorismate, which leads to the biosynthesis of aromatic amino acids. Catalyzes the reversible NADPH linked reduction of 3-dehydroshikimate (DHSA) to yield shikimate (SA).</text>
</comment>
<comment type="catalytic activity">
    <reaction evidence="1">
        <text>shikimate + NADP(+) = 3-dehydroshikimate + NADPH + H(+)</text>
        <dbReference type="Rhea" id="RHEA:17737"/>
        <dbReference type="ChEBI" id="CHEBI:15378"/>
        <dbReference type="ChEBI" id="CHEBI:16630"/>
        <dbReference type="ChEBI" id="CHEBI:36208"/>
        <dbReference type="ChEBI" id="CHEBI:57783"/>
        <dbReference type="ChEBI" id="CHEBI:58349"/>
        <dbReference type="EC" id="1.1.1.25"/>
    </reaction>
</comment>
<comment type="pathway">
    <text evidence="1">Metabolic intermediate biosynthesis; chorismate biosynthesis; chorismate from D-erythrose 4-phosphate and phosphoenolpyruvate: step 4/7.</text>
</comment>
<comment type="subunit">
    <text evidence="1">Homodimer.</text>
</comment>
<comment type="similarity">
    <text evidence="1">Belongs to the shikimate dehydrogenase family.</text>
</comment>
<name>AROE_PROM9</name>
<protein>
    <recommendedName>
        <fullName evidence="1">Shikimate dehydrogenase (NADP(+))</fullName>
        <shortName evidence="1">SDH</shortName>
        <ecNumber evidence="1">1.1.1.25</ecNumber>
    </recommendedName>
</protein>
<reference key="1">
    <citation type="journal article" date="2006" name="Science">
        <title>Genomic islands and the ecology and evolution of Prochlorococcus.</title>
        <authorList>
            <person name="Coleman M.L."/>
            <person name="Sullivan M.B."/>
            <person name="Martiny A.C."/>
            <person name="Steglich C."/>
            <person name="Barry K."/>
            <person name="Delong E.F."/>
            <person name="Chisholm S.W."/>
        </authorList>
    </citation>
    <scope>NUCLEOTIDE SEQUENCE [LARGE SCALE GENOMIC DNA]</scope>
    <source>
        <strain>MIT 9312</strain>
    </source>
</reference>